<sequence>MGSKTEMMERDAMATVAPYAPVTYHRRARVDLDDRLPKPYMPRALQAPDREHPYGTPGHKNYGLSVLQQHVSFFDIDDNGIIYPWETYSGLRMLGFNIIGSLIIAAVINLTLSYATLPGWLPSPFFPIYIHNIHKSKHGSDSKTYDNEGRFMPVNLELIFSKYAKTLPDKLSLGELWEMTEGNRDAWDIFGWIAGKIEWGLLYLLARDEEGFLSKEAIRRCFDGSLFEYCAKIYAGISEDKTAYY</sequence>
<feature type="initiator methionine" description="Removed" evidence="7">
    <location>
        <position position="1"/>
    </location>
</feature>
<feature type="chain" id="PRO_0000415552" description="Peroxygenase 1">
    <location>
        <begin position="2"/>
        <end position="245"/>
    </location>
</feature>
<feature type="domain" description="EF-hand">
    <location>
        <begin position="62"/>
        <end position="97"/>
    </location>
</feature>
<feature type="short sequence motif" description="Proline-knot">
    <location>
        <begin position="118"/>
        <end position="127"/>
    </location>
</feature>
<feature type="binding site" description="axial binding residue" evidence="9">
    <location>
        <position position="70"/>
    </location>
    <ligand>
        <name>heme</name>
        <dbReference type="ChEBI" id="CHEBI:30413"/>
    </ligand>
    <ligandPart>
        <name>Fe</name>
        <dbReference type="ChEBI" id="CHEBI:18248"/>
    </ligandPart>
</feature>
<feature type="binding site" evidence="1">
    <location>
        <position position="75"/>
    </location>
    <ligand>
        <name>Ca(2+)</name>
        <dbReference type="ChEBI" id="CHEBI:29108"/>
    </ligand>
</feature>
<feature type="binding site" evidence="1">
    <location>
        <position position="77"/>
    </location>
    <ligand>
        <name>Ca(2+)</name>
        <dbReference type="ChEBI" id="CHEBI:29108"/>
    </ligand>
</feature>
<feature type="binding site" evidence="1">
    <location>
        <position position="79"/>
    </location>
    <ligand>
        <name>Ca(2+)</name>
        <dbReference type="ChEBI" id="CHEBI:29108"/>
    </ligand>
</feature>
<feature type="binding site" evidence="1">
    <location>
        <position position="86"/>
    </location>
    <ligand>
        <name>Ca(2+)</name>
        <dbReference type="ChEBI" id="CHEBI:29108"/>
    </ligand>
</feature>
<feature type="modified residue" description="N-acetylglycine" evidence="7">
    <location>
        <position position="2"/>
    </location>
</feature>
<feature type="modified residue" description="Phosphoserine" evidence="6">
    <location>
        <position position="225"/>
    </location>
</feature>
<feature type="disulfide bond" evidence="6">
    <location>
        <begin position="221"/>
        <end position="230"/>
    </location>
</feature>
<feature type="mutagenesis site" description="No effect on molecular weight; when associated with V-109 and V-116." evidence="4">
    <original>T</original>
    <variation>V</variation>
    <location>
        <position position="15"/>
    </location>
</feature>
<feature type="mutagenesis site" description="No effect on activity." evidence="4">
    <original>H</original>
    <variation>V</variation>
    <location>
        <position position="52"/>
    </location>
</feature>
<feature type="mutagenesis site" description="No effect on activity." evidence="4">
    <original>H</original>
    <variation>V</variation>
    <location>
        <position position="59"/>
    </location>
</feature>
<feature type="mutagenesis site" description="Total loss of activity." evidence="4">
    <original>H</original>
    <variation>V</variation>
    <location>
        <position position="70"/>
    </location>
</feature>
<feature type="mutagenesis site" description="No effect on activity." evidence="4">
    <original>D</original>
    <variation>V</variation>
    <location>
        <position position="75"/>
    </location>
</feature>
<feature type="mutagenesis site" description="No effect on molecular weight; when associated with V-15 and V-116." evidence="4">
    <original>N</original>
    <variation>V</variation>
    <location>
        <position position="109"/>
    </location>
</feature>
<feature type="mutagenesis site" description="No effect on molecular weight; when associated with V-15 and V-109." evidence="4">
    <original>T</original>
    <variation>V</variation>
    <location>
        <position position="116"/>
    </location>
</feature>
<feature type="mutagenesis site" description="No effect on activity." evidence="4">
    <original>H</original>
    <variation>V</variation>
    <location>
        <position position="131"/>
    </location>
</feature>
<feature type="mutagenesis site" description="No effect on activity." evidence="4">
    <original>H</original>
    <variation>V</variation>
    <location>
        <position position="134"/>
    </location>
</feature>
<feature type="mutagenesis site" description="Decreased heme binding and total loss of activity." evidence="4">
    <original>H</original>
    <variation>V</variation>
    <location>
        <position position="138"/>
    </location>
</feature>
<feature type="mutagenesis site" description="No effect on molecular weight." evidence="4">
    <original>K</original>
    <variation>V</variation>
    <location>
        <position position="196"/>
    </location>
</feature>
<feature type="mutagenesis site" description="No effect on activity." evidence="4">
    <original>C</original>
    <variation>G</variation>
    <location>
        <position position="221"/>
    </location>
</feature>
<feature type="mutagenesis site" description="No effect on activity." evidence="4">
    <original>C</original>
    <variation>G</variation>
    <location>
        <position position="230"/>
    </location>
</feature>
<feature type="sequence conflict" description="In Ref. 4; AAL36241." evidence="8" ref="4">
    <original>Y</original>
    <variation>H</variation>
    <location>
        <position position="145"/>
    </location>
</feature>
<organism>
    <name type="scientific">Arabidopsis thaliana</name>
    <name type="common">Mouse-ear cress</name>
    <dbReference type="NCBI Taxonomy" id="3702"/>
    <lineage>
        <taxon>Eukaryota</taxon>
        <taxon>Viridiplantae</taxon>
        <taxon>Streptophyta</taxon>
        <taxon>Embryophyta</taxon>
        <taxon>Tracheophyta</taxon>
        <taxon>Spermatophyta</taxon>
        <taxon>Magnoliopsida</taxon>
        <taxon>eudicotyledons</taxon>
        <taxon>Gunneridae</taxon>
        <taxon>Pentapetalae</taxon>
        <taxon>rosids</taxon>
        <taxon>malvids</taxon>
        <taxon>Brassicales</taxon>
        <taxon>Brassicaceae</taxon>
        <taxon>Camelineae</taxon>
        <taxon>Arabidopsis</taxon>
    </lineage>
</organism>
<dbReference type="EC" id="1.11.2.3" evidence="4"/>
<dbReference type="EMBL" id="AF067857">
    <property type="protein sequence ID" value="AAC27072.1"/>
    <property type="molecule type" value="Genomic_DNA"/>
</dbReference>
<dbReference type="EMBL" id="AL035440">
    <property type="protein sequence ID" value="CAB36520.1"/>
    <property type="molecule type" value="Genomic_DNA"/>
</dbReference>
<dbReference type="EMBL" id="AL161565">
    <property type="protein sequence ID" value="CAB79529.1"/>
    <property type="molecule type" value="Genomic_DNA"/>
</dbReference>
<dbReference type="EMBL" id="CP002687">
    <property type="protein sequence ID" value="AEE85247.1"/>
    <property type="molecule type" value="Genomic_DNA"/>
</dbReference>
<dbReference type="EMBL" id="AY063885">
    <property type="protein sequence ID" value="AAL36241.1"/>
    <property type="molecule type" value="mRNA"/>
</dbReference>
<dbReference type="PIR" id="T04797">
    <property type="entry name" value="T04797"/>
</dbReference>
<dbReference type="RefSeq" id="NP_194404.1">
    <property type="nucleotide sequence ID" value="NM_118808.5"/>
</dbReference>
<dbReference type="BioGRID" id="14068">
    <property type="interactions" value="1"/>
</dbReference>
<dbReference type="FunCoup" id="O81270">
    <property type="interactions" value="67"/>
</dbReference>
<dbReference type="STRING" id="3702.O81270"/>
<dbReference type="iPTMnet" id="O81270"/>
<dbReference type="PaxDb" id="3702-AT4G26740.1"/>
<dbReference type="ProteomicsDB" id="224819"/>
<dbReference type="EnsemblPlants" id="AT4G26740.1">
    <property type="protein sequence ID" value="AT4G26740.1"/>
    <property type="gene ID" value="AT4G26740"/>
</dbReference>
<dbReference type="GeneID" id="828781"/>
<dbReference type="Gramene" id="AT4G26740.1">
    <property type="protein sequence ID" value="AT4G26740.1"/>
    <property type="gene ID" value="AT4G26740"/>
</dbReference>
<dbReference type="KEGG" id="ath:AT4G26740"/>
<dbReference type="Araport" id="AT4G26740"/>
<dbReference type="TAIR" id="AT4G26740">
    <property type="gene designation" value="ATS1"/>
</dbReference>
<dbReference type="eggNOG" id="ENOG502QQD0">
    <property type="taxonomic scope" value="Eukaryota"/>
</dbReference>
<dbReference type="HOGENOM" id="CLU_062049_0_1_1"/>
<dbReference type="InParanoid" id="O81270"/>
<dbReference type="OMA" id="WGGAFFE"/>
<dbReference type="PhylomeDB" id="O81270"/>
<dbReference type="BioCyc" id="MetaCyc:MONOMER-15999"/>
<dbReference type="PRO" id="PR:O81270"/>
<dbReference type="Proteomes" id="UP000006548">
    <property type="component" value="Chromosome 4"/>
</dbReference>
<dbReference type="ExpressionAtlas" id="O81270">
    <property type="expression patterns" value="baseline and differential"/>
</dbReference>
<dbReference type="GO" id="GO:0005783">
    <property type="term" value="C:endoplasmic reticulum"/>
    <property type="evidence" value="ECO:0007669"/>
    <property type="project" value="UniProtKB-KW"/>
</dbReference>
<dbReference type="GO" id="GO:0016020">
    <property type="term" value="C:membrane"/>
    <property type="evidence" value="ECO:0007669"/>
    <property type="project" value="UniProtKB-KW"/>
</dbReference>
<dbReference type="GO" id="GO:0012511">
    <property type="term" value="C:monolayer-surrounded lipid storage body"/>
    <property type="evidence" value="ECO:0000314"/>
    <property type="project" value="UniProtKB"/>
</dbReference>
<dbReference type="GO" id="GO:0005509">
    <property type="term" value="F:calcium ion binding"/>
    <property type="evidence" value="ECO:0000314"/>
    <property type="project" value="UniProtKB"/>
</dbReference>
<dbReference type="GO" id="GO:0020037">
    <property type="term" value="F:heme binding"/>
    <property type="evidence" value="ECO:0000314"/>
    <property type="project" value="UniProtKB"/>
</dbReference>
<dbReference type="GO" id="GO:0004392">
    <property type="term" value="F:heme oxygenase (decyclizing) activity"/>
    <property type="evidence" value="ECO:0000314"/>
    <property type="project" value="TAIR"/>
</dbReference>
<dbReference type="GO" id="GO:0071614">
    <property type="term" value="F:linoleic acid epoxygenase activity"/>
    <property type="evidence" value="ECO:0000314"/>
    <property type="project" value="TAIR"/>
</dbReference>
<dbReference type="GO" id="GO:0004497">
    <property type="term" value="F:monooxygenase activity"/>
    <property type="evidence" value="ECO:0000314"/>
    <property type="project" value="TAIR"/>
</dbReference>
<dbReference type="GO" id="GO:1990137">
    <property type="term" value="F:plant seed peroxygenase activity"/>
    <property type="evidence" value="ECO:0000314"/>
    <property type="project" value="UniProtKB"/>
</dbReference>
<dbReference type="GO" id="GO:0042803">
    <property type="term" value="F:protein homodimerization activity"/>
    <property type="evidence" value="ECO:0000314"/>
    <property type="project" value="UniProtKB"/>
</dbReference>
<dbReference type="GO" id="GO:0006952">
    <property type="term" value="P:defense response"/>
    <property type="evidence" value="ECO:0000304"/>
    <property type="project" value="TAIR"/>
</dbReference>
<dbReference type="GO" id="GO:0009793">
    <property type="term" value="P:embryo development ending in seed dormancy"/>
    <property type="evidence" value="ECO:0000304"/>
    <property type="project" value="TAIR"/>
</dbReference>
<dbReference type="GO" id="GO:0034389">
    <property type="term" value="P:lipid droplet organization"/>
    <property type="evidence" value="ECO:0000314"/>
    <property type="project" value="TAIR"/>
</dbReference>
<dbReference type="GO" id="GO:0010888">
    <property type="term" value="P:negative regulation of lipid storage"/>
    <property type="evidence" value="ECO:0000315"/>
    <property type="project" value="UniProtKB"/>
</dbReference>
<dbReference type="GO" id="GO:0031408">
    <property type="term" value="P:oxylipin biosynthetic process"/>
    <property type="evidence" value="ECO:0000314"/>
    <property type="project" value="TAIR"/>
</dbReference>
<dbReference type="GO" id="GO:0010431">
    <property type="term" value="P:seed maturation"/>
    <property type="evidence" value="ECO:0000270"/>
    <property type="project" value="UniProtKB"/>
</dbReference>
<dbReference type="InterPro" id="IPR007736">
    <property type="entry name" value="Caleosin-related"/>
</dbReference>
<dbReference type="PANTHER" id="PTHR31495:SF50">
    <property type="entry name" value="PEROXYGENASE 1"/>
    <property type="match status" value="1"/>
</dbReference>
<dbReference type="PANTHER" id="PTHR31495">
    <property type="entry name" value="PEROXYGENASE 3-RELATED"/>
    <property type="match status" value="1"/>
</dbReference>
<dbReference type="Pfam" id="PF05042">
    <property type="entry name" value="Caleosin"/>
    <property type="match status" value="1"/>
</dbReference>
<name>PXG1_ARATH</name>
<proteinExistence type="evidence at protein level"/>
<accession>O81270</accession>
<accession>Q8VZS4</accession>
<evidence type="ECO:0000255" key="1"/>
<evidence type="ECO:0000269" key="2">
    <source>
    </source>
</evidence>
<evidence type="ECO:0000269" key="3">
    <source>
    </source>
</evidence>
<evidence type="ECO:0000269" key="4">
    <source>
    </source>
</evidence>
<evidence type="ECO:0000269" key="5">
    <source>
    </source>
</evidence>
<evidence type="ECO:0000269" key="6">
    <source>
    </source>
</evidence>
<evidence type="ECO:0000269" key="7">
    <source>
    </source>
</evidence>
<evidence type="ECO:0000305" key="8"/>
<evidence type="ECO:0000305" key="9">
    <source>
    </source>
</evidence>
<gene>
    <name type="primary">PXG1</name>
    <name type="synonym">ATS1</name>
    <name type="synonym">CLO1</name>
    <name type="ordered locus">At4g26740</name>
    <name type="ORF">F10M23.80</name>
</gene>
<keyword id="KW-0007">Acetylation</keyword>
<keyword id="KW-0106">Calcium</keyword>
<keyword id="KW-0903">Direct protein sequencing</keyword>
<keyword id="KW-1015">Disulfide bond</keyword>
<keyword id="KW-0256">Endoplasmic reticulum</keyword>
<keyword id="KW-0349">Heme</keyword>
<keyword id="KW-0408">Iron</keyword>
<keyword id="KW-0551">Lipid droplet</keyword>
<keyword id="KW-0472">Membrane</keyword>
<keyword id="KW-0479">Metal-binding</keyword>
<keyword id="KW-0492">Microsome</keyword>
<keyword id="KW-0560">Oxidoreductase</keyword>
<keyword id="KW-0597">Phosphoprotein</keyword>
<keyword id="KW-1185">Reference proteome</keyword>
<comment type="function">
    <text evidence="5">Calcium-binding peroxygenase involved in the degradation of storage lipid in oil bodies. May be involved in the interaction between oil bodies and vacuoles during seed germination and in the oxylipin signaling pathways and plant defense responses. Can catalyze sulfoxidation of thiobenzamide, hydroxylation of aniline, epoxidation of oleic acid or intramolecular oxygen transfer.</text>
</comment>
<comment type="catalytic activity">
    <reaction evidence="4">
        <text>RH + ROOH = ROH + ROH.</text>
        <dbReference type="EC" id="1.11.2.3"/>
    </reaction>
</comment>
<comment type="cofactor">
    <cofactor evidence="4">
        <name>heme b</name>
        <dbReference type="ChEBI" id="CHEBI:60344"/>
    </cofactor>
    <text evidence="4">Binds 1 heme b (iron(II)-protoporphyrin IX) group.</text>
</comment>
<comment type="cofactor">
    <cofactor>
        <name>Ca(2+)</name>
        <dbReference type="ChEBI" id="CHEBI:29108"/>
    </cofactor>
</comment>
<comment type="activity regulation">
    <text evidence="4">Inhibited by beta-mercaptoethanol and the organophosphorothioate terbufos.</text>
</comment>
<comment type="subunit">
    <text evidence="4 6">Homodimer.</text>
</comment>
<comment type="subcellular location">
    <subcellularLocation>
        <location evidence="3">Microsome membrane</location>
    </subcellularLocation>
    <subcellularLocation>
        <location evidence="3">Lipid droplet</location>
    </subcellularLocation>
</comment>
<comment type="tissue specificity">
    <text evidence="2 3">Expressed in seeds. Expression restricted to the developing embryo with enhanced expression in both the protoderm and vasculature. Detected in root tip cells throughout development.</text>
</comment>
<comment type="developmental stage">
    <text evidence="2 3">Expressed during the early-to-late cotyledon stage of seed maturation.</text>
</comment>
<comment type="induction">
    <text evidence="3">Not induced by abscisic acid or osmotic stress.</text>
</comment>
<comment type="domain">
    <text>The proline-knot motif (118-127) may be involved in targeting to lipid bodies.</text>
</comment>
<comment type="domain">
    <text>Transmembrane regions are predicted by sequence analysis tools, but these regions probably constitute hydrophobic domains associated to phospholipids.</text>
</comment>
<comment type="PTM">
    <text evidence="6">Phosphorylated. Partially phosphorylated at Ser-225, but not phosphorylated at Ser-72, Tyr-145, Thr-166 or Ser-172. Phosphorylation is not required for catalytic activity.</text>
</comment>
<comment type="disruption phenotype">
    <text evidence="5">No visible phenotype, but retarded growth during the first 48 hours after germination.</text>
</comment>
<comment type="similarity">
    <text evidence="8">Belongs to the caleosin family.</text>
</comment>
<reference key="1">
    <citation type="journal article" date="1999" name="Plant Mol. Biol.">
        <title>ATS1 and ATS3: two novel embryo-specific genes in Arabidopsis thaliana.</title>
        <authorList>
            <person name="Nuccio M.L."/>
            <person name="Thomas T.L."/>
        </authorList>
    </citation>
    <scope>NUCLEOTIDE SEQUENCE [GENOMIC DNA]</scope>
    <scope>TISSUE SPECIFICITY</scope>
    <scope>DEVELOPMENTAL STAGE</scope>
    <source>
        <strain>cv. Landsberg erecta</strain>
    </source>
</reference>
<reference key="2">
    <citation type="journal article" date="1999" name="Nature">
        <title>Sequence and analysis of chromosome 4 of the plant Arabidopsis thaliana.</title>
        <authorList>
            <person name="Mayer K.F.X."/>
            <person name="Schueller C."/>
            <person name="Wambutt R."/>
            <person name="Murphy G."/>
            <person name="Volckaert G."/>
            <person name="Pohl T."/>
            <person name="Duesterhoeft A."/>
            <person name="Stiekema W."/>
            <person name="Entian K.-D."/>
            <person name="Terryn N."/>
            <person name="Harris B."/>
            <person name="Ansorge W."/>
            <person name="Brandt P."/>
            <person name="Grivell L.A."/>
            <person name="Rieger M."/>
            <person name="Weichselgartner M."/>
            <person name="de Simone V."/>
            <person name="Obermaier B."/>
            <person name="Mache R."/>
            <person name="Mueller M."/>
            <person name="Kreis M."/>
            <person name="Delseny M."/>
            <person name="Puigdomenech P."/>
            <person name="Watson M."/>
            <person name="Schmidtheini T."/>
            <person name="Reichert B."/>
            <person name="Portetelle D."/>
            <person name="Perez-Alonso M."/>
            <person name="Boutry M."/>
            <person name="Bancroft I."/>
            <person name="Vos P."/>
            <person name="Hoheisel J."/>
            <person name="Zimmermann W."/>
            <person name="Wedler H."/>
            <person name="Ridley P."/>
            <person name="Langham S.-A."/>
            <person name="McCullagh B."/>
            <person name="Bilham L."/>
            <person name="Robben J."/>
            <person name="van der Schueren J."/>
            <person name="Grymonprez B."/>
            <person name="Chuang Y.-J."/>
            <person name="Vandenbussche F."/>
            <person name="Braeken M."/>
            <person name="Weltjens I."/>
            <person name="Voet M."/>
            <person name="Bastiaens I."/>
            <person name="Aert R."/>
            <person name="Defoor E."/>
            <person name="Weitzenegger T."/>
            <person name="Bothe G."/>
            <person name="Ramsperger U."/>
            <person name="Hilbert H."/>
            <person name="Braun M."/>
            <person name="Holzer E."/>
            <person name="Brandt A."/>
            <person name="Peters S."/>
            <person name="van Staveren M."/>
            <person name="Dirkse W."/>
            <person name="Mooijman P."/>
            <person name="Klein Lankhorst R."/>
            <person name="Rose M."/>
            <person name="Hauf J."/>
            <person name="Koetter P."/>
            <person name="Berneiser S."/>
            <person name="Hempel S."/>
            <person name="Feldpausch M."/>
            <person name="Lamberth S."/>
            <person name="Van den Daele H."/>
            <person name="De Keyser A."/>
            <person name="Buysshaert C."/>
            <person name="Gielen J."/>
            <person name="Villarroel R."/>
            <person name="De Clercq R."/>
            <person name="van Montagu M."/>
            <person name="Rogers J."/>
            <person name="Cronin A."/>
            <person name="Quail M.A."/>
            <person name="Bray-Allen S."/>
            <person name="Clark L."/>
            <person name="Doggett J."/>
            <person name="Hall S."/>
            <person name="Kay M."/>
            <person name="Lennard N."/>
            <person name="McLay K."/>
            <person name="Mayes R."/>
            <person name="Pettett A."/>
            <person name="Rajandream M.A."/>
            <person name="Lyne M."/>
            <person name="Benes V."/>
            <person name="Rechmann S."/>
            <person name="Borkova D."/>
            <person name="Bloecker H."/>
            <person name="Scharfe M."/>
            <person name="Grimm M."/>
            <person name="Loehnert T.-H."/>
            <person name="Dose S."/>
            <person name="de Haan M."/>
            <person name="Maarse A.C."/>
            <person name="Schaefer M."/>
            <person name="Mueller-Auer S."/>
            <person name="Gabel C."/>
            <person name="Fuchs M."/>
            <person name="Fartmann B."/>
            <person name="Granderath K."/>
            <person name="Dauner D."/>
            <person name="Herzl A."/>
            <person name="Neumann S."/>
            <person name="Argiriou A."/>
            <person name="Vitale D."/>
            <person name="Liguori R."/>
            <person name="Piravandi E."/>
            <person name="Massenet O."/>
            <person name="Quigley F."/>
            <person name="Clabauld G."/>
            <person name="Muendlein A."/>
            <person name="Felber R."/>
            <person name="Schnabl S."/>
            <person name="Hiller R."/>
            <person name="Schmidt W."/>
            <person name="Lecharny A."/>
            <person name="Aubourg S."/>
            <person name="Chefdor F."/>
            <person name="Cooke R."/>
            <person name="Berger C."/>
            <person name="Monfort A."/>
            <person name="Casacuberta E."/>
            <person name="Gibbons T."/>
            <person name="Weber N."/>
            <person name="Vandenbol M."/>
            <person name="Bargues M."/>
            <person name="Terol J."/>
            <person name="Torres A."/>
            <person name="Perez-Perez A."/>
            <person name="Purnelle B."/>
            <person name="Bent E."/>
            <person name="Johnson S."/>
            <person name="Tacon D."/>
            <person name="Jesse T."/>
            <person name="Heijnen L."/>
            <person name="Schwarz S."/>
            <person name="Scholler P."/>
            <person name="Heber S."/>
            <person name="Francs P."/>
            <person name="Bielke C."/>
            <person name="Frishman D."/>
            <person name="Haase D."/>
            <person name="Lemcke K."/>
            <person name="Mewes H.-W."/>
            <person name="Stocker S."/>
            <person name="Zaccaria P."/>
            <person name="Bevan M."/>
            <person name="Wilson R.K."/>
            <person name="de la Bastide M."/>
            <person name="Habermann K."/>
            <person name="Parnell L."/>
            <person name="Dedhia N."/>
            <person name="Gnoj L."/>
            <person name="Schutz K."/>
            <person name="Huang E."/>
            <person name="Spiegel L."/>
            <person name="Sekhon M."/>
            <person name="Murray J."/>
            <person name="Sheet P."/>
            <person name="Cordes M."/>
            <person name="Abu-Threideh J."/>
            <person name="Stoneking T."/>
            <person name="Kalicki J."/>
            <person name="Graves T."/>
            <person name="Harmon G."/>
            <person name="Edwards J."/>
            <person name="Latreille P."/>
            <person name="Courtney L."/>
            <person name="Cloud J."/>
            <person name="Abbott A."/>
            <person name="Scott K."/>
            <person name="Johnson D."/>
            <person name="Minx P."/>
            <person name="Bentley D."/>
            <person name="Fulton B."/>
            <person name="Miller N."/>
            <person name="Greco T."/>
            <person name="Kemp K."/>
            <person name="Kramer J."/>
            <person name="Fulton L."/>
            <person name="Mardis E."/>
            <person name="Dante M."/>
            <person name="Pepin K."/>
            <person name="Hillier L.W."/>
            <person name="Nelson J."/>
            <person name="Spieth J."/>
            <person name="Ryan E."/>
            <person name="Andrews S."/>
            <person name="Geisel C."/>
            <person name="Layman D."/>
            <person name="Du H."/>
            <person name="Ali J."/>
            <person name="Berghoff A."/>
            <person name="Jones K."/>
            <person name="Drone K."/>
            <person name="Cotton M."/>
            <person name="Joshu C."/>
            <person name="Antonoiu B."/>
            <person name="Zidanic M."/>
            <person name="Strong C."/>
            <person name="Sun H."/>
            <person name="Lamar B."/>
            <person name="Yordan C."/>
            <person name="Ma P."/>
            <person name="Zhong J."/>
            <person name="Preston R."/>
            <person name="Vil D."/>
            <person name="Shekher M."/>
            <person name="Matero A."/>
            <person name="Shah R."/>
            <person name="Swaby I.K."/>
            <person name="O'Shaughnessy A."/>
            <person name="Rodriguez M."/>
            <person name="Hoffman J."/>
            <person name="Till S."/>
            <person name="Granat S."/>
            <person name="Shohdy N."/>
            <person name="Hasegawa A."/>
            <person name="Hameed A."/>
            <person name="Lodhi M."/>
            <person name="Johnson A."/>
            <person name="Chen E."/>
            <person name="Marra M.A."/>
            <person name="Martienssen R."/>
            <person name="McCombie W.R."/>
        </authorList>
    </citation>
    <scope>NUCLEOTIDE SEQUENCE [LARGE SCALE GENOMIC DNA]</scope>
    <source>
        <strain>cv. Columbia</strain>
    </source>
</reference>
<reference key="3">
    <citation type="journal article" date="2017" name="Plant J.">
        <title>Araport11: a complete reannotation of the Arabidopsis thaliana reference genome.</title>
        <authorList>
            <person name="Cheng C.Y."/>
            <person name="Krishnakumar V."/>
            <person name="Chan A.P."/>
            <person name="Thibaud-Nissen F."/>
            <person name="Schobel S."/>
            <person name="Town C.D."/>
        </authorList>
    </citation>
    <scope>GENOME REANNOTATION</scope>
    <source>
        <strain>cv. Columbia</strain>
    </source>
</reference>
<reference key="4">
    <citation type="journal article" date="2003" name="Science">
        <title>Empirical analysis of transcriptional activity in the Arabidopsis genome.</title>
        <authorList>
            <person name="Yamada K."/>
            <person name="Lim J."/>
            <person name="Dale J.M."/>
            <person name="Chen H."/>
            <person name="Shinn P."/>
            <person name="Palm C.J."/>
            <person name="Southwick A.M."/>
            <person name="Wu H.C."/>
            <person name="Kim C.J."/>
            <person name="Nguyen M."/>
            <person name="Pham P.K."/>
            <person name="Cheuk R.F."/>
            <person name="Karlin-Newmann G."/>
            <person name="Liu S.X."/>
            <person name="Lam B."/>
            <person name="Sakano H."/>
            <person name="Wu T."/>
            <person name="Yu G."/>
            <person name="Miranda M."/>
            <person name="Quach H.L."/>
            <person name="Tripp M."/>
            <person name="Chang C.H."/>
            <person name="Lee J.M."/>
            <person name="Toriumi M.J."/>
            <person name="Chan M.M."/>
            <person name="Tang C.C."/>
            <person name="Onodera C.S."/>
            <person name="Deng J.M."/>
            <person name="Akiyama K."/>
            <person name="Ansari Y."/>
            <person name="Arakawa T."/>
            <person name="Banh J."/>
            <person name="Banno F."/>
            <person name="Bowser L."/>
            <person name="Brooks S.Y."/>
            <person name="Carninci P."/>
            <person name="Chao Q."/>
            <person name="Choy N."/>
            <person name="Enju A."/>
            <person name="Goldsmith A.D."/>
            <person name="Gurjal M."/>
            <person name="Hansen N.F."/>
            <person name="Hayashizaki Y."/>
            <person name="Johnson-Hopson C."/>
            <person name="Hsuan V.W."/>
            <person name="Iida K."/>
            <person name="Karnes M."/>
            <person name="Khan S."/>
            <person name="Koesema E."/>
            <person name="Ishida J."/>
            <person name="Jiang P.X."/>
            <person name="Jones T."/>
            <person name="Kawai J."/>
            <person name="Kamiya A."/>
            <person name="Meyers C."/>
            <person name="Nakajima M."/>
            <person name="Narusaka M."/>
            <person name="Seki M."/>
            <person name="Sakurai T."/>
            <person name="Satou M."/>
            <person name="Tamse R."/>
            <person name="Vaysberg M."/>
            <person name="Wallender E.K."/>
            <person name="Wong C."/>
            <person name="Yamamura Y."/>
            <person name="Yuan S."/>
            <person name="Shinozaki K."/>
            <person name="Davis R.W."/>
            <person name="Theologis A."/>
            <person name="Ecker J.R."/>
        </authorList>
    </citation>
    <scope>NUCLEOTIDE SEQUENCE [LARGE SCALE MRNA]</scope>
    <source>
        <strain>cv. Columbia</strain>
    </source>
</reference>
<reference key="5">
    <citation type="journal article" date="2011" name="Proteomics">
        <title>New protein isoforms identified within Arabidopsis thaliana seed oil bodies combining chymotrypsin/trypsin digestion and peptide fragmentation analysis.</title>
        <authorList>
            <person name="Vermachova M."/>
            <person name="Purkrtova Z."/>
            <person name="Santrucek J."/>
            <person name="Jolivet P."/>
            <person name="Chardot T."/>
            <person name="Kodicek M."/>
        </authorList>
    </citation>
    <scope>PROTEIN SEQUENCE OF N-TERMINUS</scope>
    <scope>CLEAVAGE OF INITIATOR METHIONINE</scope>
    <scope>ACETYLATION AT GLY-2</scope>
    <scope>IDENTIFICATION BY MASS SPECTROMETRY</scope>
</reference>
<reference key="6">
    <citation type="journal article" date="2000" name="Plant Mol. Biol.">
        <title>Caleosins: Ca2+-binding proteins associated with lipid bodies.</title>
        <authorList>
            <person name="Naested H."/>
            <person name="Frandsen G.I."/>
            <person name="Jauh G.Y."/>
            <person name="Hernandez-Pinzon I."/>
            <person name="Nielsen H.B."/>
            <person name="Murphy D.J."/>
            <person name="Rogers J.C."/>
            <person name="Mundy J."/>
        </authorList>
    </citation>
    <scope>GENE FAMILY</scope>
    <scope>NOMENCLATURE</scope>
    <scope>TISSUE SPECIFICITY</scope>
    <scope>DEVELOPMENTAL STAGE</scope>
    <scope>INDUCTION</scope>
    <scope>SUBCELLULAR LOCATION</scope>
</reference>
<reference key="7">
    <citation type="journal article" date="2006" name="Plant J.">
        <title>A role for caleosin in degradation of oil-body storage lipid during seed germination.</title>
        <authorList>
            <person name="Poxleitner M."/>
            <person name="Rogers S.W."/>
            <person name="Lacey Samuels A."/>
            <person name="Browse J."/>
            <person name="Rogers J.C."/>
        </authorList>
    </citation>
    <scope>FUNCTION</scope>
    <scope>DISRUPTION PHENOTYPE</scope>
</reference>
<reference key="8">
    <citation type="journal article" date="2006" name="J. Biol. Chem.">
        <title>Plant seed peroxygenase is an original heme-oxygenase with an EF-hand calcium binding motif.</title>
        <authorList>
            <person name="Hanano A."/>
            <person name="Burcklen M."/>
            <person name="Flenet M."/>
            <person name="Ivancich A."/>
            <person name="Louwagie M."/>
            <person name="Garin J."/>
            <person name="Blee E."/>
        </authorList>
    </citation>
    <scope>CATALYTIC ACTIVITY</scope>
    <scope>COFACTOR</scope>
    <scope>CALCIUM-BINDING</scope>
    <scope>ACTIVITY REGULATION</scope>
    <scope>SUBUNIT</scope>
    <scope>MUTAGENESIS OF THR-15; HIS-52; HIS-59; HIS-70; ASP-75; ASN-109; THR-116; HIS-131; HIS-134; HIS-138; LYS-196; CYS-221 AND CYS-230</scope>
</reference>
<reference key="9">
    <citation type="journal article" date="2007" name="Arch. Biochem. Biophys.">
        <title>Structural properties of caleosin: a MS and CD study.</title>
        <authorList>
            <person name="Purkrtova Z."/>
            <person name="d'Andrea S."/>
            <person name="Jolivet P."/>
            <person name="Lipovova P."/>
            <person name="Kralova B."/>
            <person name="Kodicek M."/>
            <person name="Chardot T."/>
        </authorList>
    </citation>
    <scope>IDENTIFICATION BY MASS SPECTROMETRY</scope>
    <scope>PHOSPHORYLATION AT SER-225</scope>
    <scope>DISULFIDE BOND</scope>
    <scope>SUBUNIT</scope>
</reference>
<reference key="10">
    <citation type="journal article" date="2008" name="J. Agric. Food Chem.">
        <title>Caleosin of Arabidopsis thaliana: effect of calcium on functional and structural properties.</title>
        <authorList>
            <person name="Purkrtova Z."/>
            <person name="Le Bon C."/>
            <person name="Kralova B."/>
            <person name="Ropers M.H."/>
            <person name="Anton M."/>
            <person name="Chardot T."/>
        </authorList>
    </citation>
    <scope>CALCIUM-BINDING</scope>
</reference>
<protein>
    <recommendedName>
        <fullName>Peroxygenase 1</fullName>
        <shortName>AtPXG1</shortName>
        <ecNumber evidence="4">1.11.2.3</ecNumber>
    </recommendedName>
    <alternativeName>
        <fullName>Caleosin-1</fullName>
    </alternativeName>
    <alternativeName>
        <fullName>Embryo-specific protein 1 (ATS1)</fullName>
    </alternativeName>
</protein>